<accession>P32703</accession>
<accession>Q2M6N9</accession>
<feature type="chain" id="PRO_0000052399" description="Uncharacterized Na(+)/H(+) exchanger YjcE">
    <location>
        <begin position="1"/>
        <end position="549"/>
    </location>
</feature>
<feature type="transmembrane region" description="Helical" evidence="1">
    <location>
        <begin position="1"/>
        <end position="21"/>
    </location>
</feature>
<feature type="transmembrane region" description="Helical" evidence="1">
    <location>
        <begin position="28"/>
        <end position="48"/>
    </location>
</feature>
<feature type="transmembrane region" description="Helical" evidence="1">
    <location>
        <begin position="50"/>
        <end position="70"/>
    </location>
</feature>
<feature type="transmembrane region" description="Helical" evidence="1">
    <location>
        <begin position="85"/>
        <end position="105"/>
    </location>
</feature>
<feature type="transmembrane region" description="Helical" evidence="1">
    <location>
        <begin position="106"/>
        <end position="126"/>
    </location>
</feature>
<feature type="transmembrane region" description="Helical" evidence="1">
    <location>
        <begin position="165"/>
        <end position="185"/>
    </location>
</feature>
<feature type="transmembrane region" description="Helical" evidence="1">
    <location>
        <begin position="187"/>
        <end position="207"/>
    </location>
</feature>
<feature type="transmembrane region" description="Helical" evidence="1">
    <location>
        <begin position="222"/>
        <end position="242"/>
    </location>
</feature>
<feature type="transmembrane region" description="Helical" evidence="1">
    <location>
        <begin position="278"/>
        <end position="298"/>
    </location>
</feature>
<feature type="transmembrane region" description="Helical" evidence="1">
    <location>
        <begin position="310"/>
        <end position="330"/>
    </location>
</feature>
<feature type="transmembrane region" description="Helical" evidence="1">
    <location>
        <begin position="361"/>
        <end position="381"/>
    </location>
</feature>
<feature type="transmembrane region" description="Helical" evidence="1">
    <location>
        <begin position="398"/>
        <end position="418"/>
    </location>
</feature>
<protein>
    <recommendedName>
        <fullName>Uncharacterized Na(+)/H(+) exchanger YjcE</fullName>
    </recommendedName>
</protein>
<comment type="subcellular location">
    <subcellularLocation>
        <location evidence="2">Cell inner membrane</location>
        <topology evidence="2">Multi-pass membrane protein</topology>
    </subcellularLocation>
</comment>
<comment type="similarity">
    <text evidence="2">Belongs to the monovalent cation:proton antiporter 1 (CPA1) transporter (TC 2.A.36) family.</text>
</comment>
<proteinExistence type="inferred from homology"/>
<name>YJCE_ECOLI</name>
<keyword id="KW-0050">Antiport</keyword>
<keyword id="KW-0997">Cell inner membrane</keyword>
<keyword id="KW-1003">Cell membrane</keyword>
<keyword id="KW-0406">Ion transport</keyword>
<keyword id="KW-0472">Membrane</keyword>
<keyword id="KW-1185">Reference proteome</keyword>
<keyword id="KW-0915">Sodium</keyword>
<keyword id="KW-0739">Sodium transport</keyword>
<keyword id="KW-0812">Transmembrane</keyword>
<keyword id="KW-1133">Transmembrane helix</keyword>
<keyword id="KW-0813">Transport</keyword>
<dbReference type="EMBL" id="U00006">
    <property type="protein sequence ID" value="AAC43159.1"/>
    <property type="molecule type" value="Genomic_DNA"/>
</dbReference>
<dbReference type="EMBL" id="U00096">
    <property type="protein sequence ID" value="AAC77035.1"/>
    <property type="molecule type" value="Genomic_DNA"/>
</dbReference>
<dbReference type="EMBL" id="AP009048">
    <property type="protein sequence ID" value="BAE78067.1"/>
    <property type="molecule type" value="Genomic_DNA"/>
</dbReference>
<dbReference type="PIR" id="H65214">
    <property type="entry name" value="H65214"/>
</dbReference>
<dbReference type="RefSeq" id="NP_418489.1">
    <property type="nucleotide sequence ID" value="NC_000913.3"/>
</dbReference>
<dbReference type="RefSeq" id="WP_000402210.1">
    <property type="nucleotide sequence ID" value="NZ_LN832404.1"/>
</dbReference>
<dbReference type="SMR" id="P32703"/>
<dbReference type="BioGRID" id="4262673">
    <property type="interactions" value="289"/>
</dbReference>
<dbReference type="FunCoup" id="P32703">
    <property type="interactions" value="242"/>
</dbReference>
<dbReference type="STRING" id="511145.b4065"/>
<dbReference type="TCDB" id="2.A.36.3.1">
    <property type="family name" value="the monovalent cation:proton antiporter-1 (cpa1) family"/>
</dbReference>
<dbReference type="jPOST" id="P32703"/>
<dbReference type="PaxDb" id="511145-b4065"/>
<dbReference type="EnsemblBacteria" id="AAC77035">
    <property type="protein sequence ID" value="AAC77035"/>
    <property type="gene ID" value="b4065"/>
</dbReference>
<dbReference type="GeneID" id="948577"/>
<dbReference type="KEGG" id="ecj:JW4026"/>
<dbReference type="KEGG" id="eco:b4065"/>
<dbReference type="KEGG" id="ecoc:C3026_21965"/>
<dbReference type="PATRIC" id="fig|1411691.4.peg.2639"/>
<dbReference type="EchoBASE" id="EB1884"/>
<dbReference type="eggNOG" id="COG0025">
    <property type="taxonomic scope" value="Bacteria"/>
</dbReference>
<dbReference type="HOGENOM" id="CLU_005912_6_3_6"/>
<dbReference type="InParanoid" id="P32703"/>
<dbReference type="OMA" id="ETVVMWW"/>
<dbReference type="OrthoDB" id="9809206at2"/>
<dbReference type="PhylomeDB" id="P32703"/>
<dbReference type="BioCyc" id="EcoCyc:YJCE-MONOMER"/>
<dbReference type="PRO" id="PR:P32703"/>
<dbReference type="Proteomes" id="UP000000625">
    <property type="component" value="Chromosome"/>
</dbReference>
<dbReference type="GO" id="GO:0005886">
    <property type="term" value="C:plasma membrane"/>
    <property type="evidence" value="ECO:0000314"/>
    <property type="project" value="EcoCyc"/>
</dbReference>
<dbReference type="GO" id="GO:0015386">
    <property type="term" value="F:potassium:proton antiporter activity"/>
    <property type="evidence" value="ECO:0000318"/>
    <property type="project" value="GO_Central"/>
</dbReference>
<dbReference type="GO" id="GO:0015385">
    <property type="term" value="F:sodium:proton antiporter activity"/>
    <property type="evidence" value="ECO:0000318"/>
    <property type="project" value="GO_Central"/>
</dbReference>
<dbReference type="GO" id="GO:0071805">
    <property type="term" value="P:potassium ion transmembrane transport"/>
    <property type="evidence" value="ECO:0000318"/>
    <property type="project" value="GO_Central"/>
</dbReference>
<dbReference type="GO" id="GO:0051453">
    <property type="term" value="P:regulation of intracellular pH"/>
    <property type="evidence" value="ECO:0000318"/>
    <property type="project" value="GO_Central"/>
</dbReference>
<dbReference type="GO" id="GO:0098719">
    <property type="term" value="P:sodium ion import across plasma membrane"/>
    <property type="evidence" value="ECO:0000318"/>
    <property type="project" value="GO_Central"/>
</dbReference>
<dbReference type="Gene3D" id="6.10.140.1330">
    <property type="match status" value="1"/>
</dbReference>
<dbReference type="InterPro" id="IPR018422">
    <property type="entry name" value="Cation/H_exchanger_CPA1"/>
</dbReference>
<dbReference type="InterPro" id="IPR004705">
    <property type="entry name" value="Cation/H_exchanger_CPA1_bac"/>
</dbReference>
<dbReference type="InterPro" id="IPR006153">
    <property type="entry name" value="Cation/H_exchanger_TM"/>
</dbReference>
<dbReference type="NCBIfam" id="TIGR00831">
    <property type="entry name" value="a_cpa1"/>
    <property type="match status" value="1"/>
</dbReference>
<dbReference type="PANTHER" id="PTHR10110">
    <property type="entry name" value="SODIUM/HYDROGEN EXCHANGER"/>
    <property type="match status" value="1"/>
</dbReference>
<dbReference type="PANTHER" id="PTHR10110:SF86">
    <property type="entry name" value="SODIUM_HYDROGEN EXCHANGER 7"/>
    <property type="match status" value="1"/>
</dbReference>
<dbReference type="Pfam" id="PF00999">
    <property type="entry name" value="Na_H_Exchanger"/>
    <property type="match status" value="1"/>
</dbReference>
<sequence>MEIFFTILIMTLVVSLSGVVTRVMPFQIPLPLMQIAIGALLAWPTFGLHVEFDPELFLVLFIPPLLFADGWKTPTREFLEHGREIFGLALALVVVTVVGIGFLIYWVVPGIPLIPAFALAAVLSPTDAVALSGIVGEGRIPKKIMGILQGEALMNDASGLVSLKFAVAVAMGTMIFTVGGATVEFMKVAIGGILAGFVVSWLYGRSLRFLSRWGGDEPATQIVLLFLLPFASYLIAEHIGVSGILAAVAAGMTITRSGVMRRAPLAMRLRANSTWAMLEFVFNGMVFLLLGLQLPGILETSLMAAEIDPNVEIWMLFTNIILIYAALMLVRFGWLWTMKKFSNRFLKKKPMEFGSWTTREILIASFAGVRGAITLAGVLSIPLLLPDGNVFPARYELVFLAAGVILFSLFVGVVMLPILLQHIEVADHSQQLKEERIARAATAEVAIVAIQKMEERLAADTEENIDNQLLTEVSSRVIGNLRRRADGRNDVESSVQEENLERRFRLAALRSERAELYHLRATREISNETLQKLLHDLDLLEALLIEENQ</sequence>
<evidence type="ECO:0000255" key="1"/>
<evidence type="ECO:0000305" key="2"/>
<organism>
    <name type="scientific">Escherichia coli (strain K12)</name>
    <dbReference type="NCBI Taxonomy" id="83333"/>
    <lineage>
        <taxon>Bacteria</taxon>
        <taxon>Pseudomonadati</taxon>
        <taxon>Pseudomonadota</taxon>
        <taxon>Gammaproteobacteria</taxon>
        <taxon>Enterobacterales</taxon>
        <taxon>Enterobacteriaceae</taxon>
        <taxon>Escherichia</taxon>
    </lineage>
</organism>
<gene>
    <name type="primary">yjcE</name>
    <name type="ordered locus">b4065</name>
    <name type="ordered locus">JW4026</name>
</gene>
<reference key="1">
    <citation type="journal article" date="1993" name="Nucleic Acids Res.">
        <title>Analysis of the Escherichia coli genome. IV. DNA sequence of the region from 89.2 to 92.8 minutes.</title>
        <authorList>
            <person name="Blattner F.R."/>
            <person name="Burland V.D."/>
            <person name="Plunkett G. III"/>
            <person name="Sofia H.J."/>
            <person name="Daniels D.L."/>
        </authorList>
    </citation>
    <scope>NUCLEOTIDE SEQUENCE [LARGE SCALE GENOMIC DNA]</scope>
    <source>
        <strain>K12 / MG1655 / ATCC 47076</strain>
    </source>
</reference>
<reference key="2">
    <citation type="journal article" date="1997" name="Science">
        <title>The complete genome sequence of Escherichia coli K-12.</title>
        <authorList>
            <person name="Blattner F.R."/>
            <person name="Plunkett G. III"/>
            <person name="Bloch C.A."/>
            <person name="Perna N.T."/>
            <person name="Burland V."/>
            <person name="Riley M."/>
            <person name="Collado-Vides J."/>
            <person name="Glasner J.D."/>
            <person name="Rode C.K."/>
            <person name="Mayhew G.F."/>
            <person name="Gregor J."/>
            <person name="Davis N.W."/>
            <person name="Kirkpatrick H.A."/>
            <person name="Goeden M.A."/>
            <person name="Rose D.J."/>
            <person name="Mau B."/>
            <person name="Shao Y."/>
        </authorList>
    </citation>
    <scope>NUCLEOTIDE SEQUENCE [LARGE SCALE GENOMIC DNA]</scope>
    <source>
        <strain>K12 / MG1655 / ATCC 47076</strain>
    </source>
</reference>
<reference key="3">
    <citation type="journal article" date="2006" name="Mol. Syst. Biol.">
        <title>Highly accurate genome sequences of Escherichia coli K-12 strains MG1655 and W3110.</title>
        <authorList>
            <person name="Hayashi K."/>
            <person name="Morooka N."/>
            <person name="Yamamoto Y."/>
            <person name="Fujita K."/>
            <person name="Isono K."/>
            <person name="Choi S."/>
            <person name="Ohtsubo E."/>
            <person name="Baba T."/>
            <person name="Wanner B.L."/>
            <person name="Mori H."/>
            <person name="Horiuchi T."/>
        </authorList>
    </citation>
    <scope>NUCLEOTIDE SEQUENCE [LARGE SCALE GENOMIC DNA]</scope>
    <source>
        <strain>K12 / W3110 / ATCC 27325 / DSM 5911</strain>
    </source>
</reference>